<gene>
    <name evidence="1" type="primary">pdxH</name>
    <name type="ordered locus">SAR11_0613</name>
</gene>
<comment type="function">
    <text evidence="1">Catalyzes the oxidation of either pyridoxine 5'-phosphate (PNP) or pyridoxamine 5'-phosphate (PMP) into pyridoxal 5'-phosphate (PLP).</text>
</comment>
<comment type="catalytic activity">
    <reaction evidence="1">
        <text>pyridoxamine 5'-phosphate + O2 + H2O = pyridoxal 5'-phosphate + H2O2 + NH4(+)</text>
        <dbReference type="Rhea" id="RHEA:15817"/>
        <dbReference type="ChEBI" id="CHEBI:15377"/>
        <dbReference type="ChEBI" id="CHEBI:15379"/>
        <dbReference type="ChEBI" id="CHEBI:16240"/>
        <dbReference type="ChEBI" id="CHEBI:28938"/>
        <dbReference type="ChEBI" id="CHEBI:58451"/>
        <dbReference type="ChEBI" id="CHEBI:597326"/>
        <dbReference type="EC" id="1.4.3.5"/>
    </reaction>
</comment>
<comment type="catalytic activity">
    <reaction evidence="1">
        <text>pyridoxine 5'-phosphate + O2 = pyridoxal 5'-phosphate + H2O2</text>
        <dbReference type="Rhea" id="RHEA:15149"/>
        <dbReference type="ChEBI" id="CHEBI:15379"/>
        <dbReference type="ChEBI" id="CHEBI:16240"/>
        <dbReference type="ChEBI" id="CHEBI:58589"/>
        <dbReference type="ChEBI" id="CHEBI:597326"/>
        <dbReference type="EC" id="1.4.3.5"/>
    </reaction>
</comment>
<comment type="cofactor">
    <cofactor evidence="1">
        <name>FMN</name>
        <dbReference type="ChEBI" id="CHEBI:58210"/>
    </cofactor>
    <text evidence="1">Binds 1 FMN per subunit.</text>
</comment>
<comment type="pathway">
    <text evidence="1">Cofactor metabolism; pyridoxal 5'-phosphate salvage; pyridoxal 5'-phosphate from pyridoxamine 5'-phosphate: step 1/1.</text>
</comment>
<comment type="pathway">
    <text evidence="1">Cofactor metabolism; pyridoxal 5'-phosphate salvage; pyridoxal 5'-phosphate from pyridoxine 5'-phosphate: step 1/1.</text>
</comment>
<comment type="subunit">
    <text evidence="1">Homodimer.</text>
</comment>
<comment type="similarity">
    <text evidence="1">Belongs to the pyridoxamine 5'-phosphate oxidase family.</text>
</comment>
<keyword id="KW-0285">Flavoprotein</keyword>
<keyword id="KW-0288">FMN</keyword>
<keyword id="KW-0560">Oxidoreductase</keyword>
<keyword id="KW-0664">Pyridoxine biosynthesis</keyword>
<keyword id="KW-1185">Reference proteome</keyword>
<protein>
    <recommendedName>
        <fullName evidence="1">Pyridoxine/pyridoxamine 5'-phosphate oxidase</fullName>
        <ecNumber evidence="1">1.4.3.5</ecNumber>
    </recommendedName>
    <alternativeName>
        <fullName evidence="1">PNP/PMP oxidase</fullName>
        <shortName evidence="1">PNPOx</shortName>
    </alternativeName>
    <alternativeName>
        <fullName evidence="1">Pyridoxal 5'-phosphate synthase</fullName>
    </alternativeName>
</protein>
<proteinExistence type="inferred from homology"/>
<organism>
    <name type="scientific">Pelagibacter ubique (strain HTCC1062)</name>
    <dbReference type="NCBI Taxonomy" id="335992"/>
    <lineage>
        <taxon>Bacteria</taxon>
        <taxon>Pseudomonadati</taxon>
        <taxon>Pseudomonadota</taxon>
        <taxon>Alphaproteobacteria</taxon>
        <taxon>Candidatus Pelagibacterales</taxon>
        <taxon>Candidatus Pelagibacteraceae</taxon>
        <taxon>Candidatus Pelagibacter</taxon>
    </lineage>
</organism>
<dbReference type="EC" id="1.4.3.5" evidence="1"/>
<dbReference type="EMBL" id="CP000084">
    <property type="protein sequence ID" value="AAZ21434.1"/>
    <property type="molecule type" value="Genomic_DNA"/>
</dbReference>
<dbReference type="RefSeq" id="WP_006997291.1">
    <property type="nucleotide sequence ID" value="NC_007205.1"/>
</dbReference>
<dbReference type="SMR" id="Q4FN05"/>
<dbReference type="STRING" id="335992.SAR11_0613"/>
<dbReference type="GeneID" id="66295119"/>
<dbReference type="KEGG" id="pub:SAR11_0613"/>
<dbReference type="eggNOG" id="COG0259">
    <property type="taxonomic scope" value="Bacteria"/>
</dbReference>
<dbReference type="HOGENOM" id="CLU_032263_2_3_5"/>
<dbReference type="OrthoDB" id="9780392at2"/>
<dbReference type="UniPathway" id="UPA01068">
    <property type="reaction ID" value="UER00304"/>
</dbReference>
<dbReference type="UniPathway" id="UPA01068">
    <property type="reaction ID" value="UER00305"/>
</dbReference>
<dbReference type="Proteomes" id="UP000002528">
    <property type="component" value="Chromosome"/>
</dbReference>
<dbReference type="GO" id="GO:0010181">
    <property type="term" value="F:FMN binding"/>
    <property type="evidence" value="ECO:0007669"/>
    <property type="project" value="UniProtKB-UniRule"/>
</dbReference>
<dbReference type="GO" id="GO:0004733">
    <property type="term" value="F:pyridoxamine phosphate oxidase activity"/>
    <property type="evidence" value="ECO:0007669"/>
    <property type="project" value="UniProtKB-UniRule"/>
</dbReference>
<dbReference type="GO" id="GO:0008615">
    <property type="term" value="P:pyridoxine biosynthetic process"/>
    <property type="evidence" value="ECO:0007669"/>
    <property type="project" value="UniProtKB-KW"/>
</dbReference>
<dbReference type="Gene3D" id="2.30.110.10">
    <property type="entry name" value="Electron Transport, Fmn-binding Protein, Chain A"/>
    <property type="match status" value="1"/>
</dbReference>
<dbReference type="HAMAP" id="MF_01629">
    <property type="entry name" value="PdxH"/>
    <property type="match status" value="1"/>
</dbReference>
<dbReference type="InterPro" id="IPR000659">
    <property type="entry name" value="Pyridox_Oxase"/>
</dbReference>
<dbReference type="InterPro" id="IPR019740">
    <property type="entry name" value="Pyridox_Oxase_CS"/>
</dbReference>
<dbReference type="InterPro" id="IPR011576">
    <property type="entry name" value="Pyridox_Oxase_N"/>
</dbReference>
<dbReference type="InterPro" id="IPR019576">
    <property type="entry name" value="Pyridoxamine_oxidase_dimer_C"/>
</dbReference>
<dbReference type="InterPro" id="IPR012349">
    <property type="entry name" value="Split_barrel_FMN-bd"/>
</dbReference>
<dbReference type="NCBIfam" id="TIGR00558">
    <property type="entry name" value="pdxH"/>
    <property type="match status" value="1"/>
</dbReference>
<dbReference type="NCBIfam" id="NF004231">
    <property type="entry name" value="PRK05679.1"/>
    <property type="match status" value="1"/>
</dbReference>
<dbReference type="PANTHER" id="PTHR10851:SF0">
    <property type="entry name" value="PYRIDOXINE-5'-PHOSPHATE OXIDASE"/>
    <property type="match status" value="1"/>
</dbReference>
<dbReference type="PANTHER" id="PTHR10851">
    <property type="entry name" value="PYRIDOXINE-5-PHOSPHATE OXIDASE"/>
    <property type="match status" value="1"/>
</dbReference>
<dbReference type="Pfam" id="PF10590">
    <property type="entry name" value="PNP_phzG_C"/>
    <property type="match status" value="1"/>
</dbReference>
<dbReference type="Pfam" id="PF01243">
    <property type="entry name" value="PNPOx_N"/>
    <property type="match status" value="1"/>
</dbReference>
<dbReference type="PIRSF" id="PIRSF000190">
    <property type="entry name" value="Pyd_amn-ph_oxd"/>
    <property type="match status" value="1"/>
</dbReference>
<dbReference type="SUPFAM" id="SSF50475">
    <property type="entry name" value="FMN-binding split barrel"/>
    <property type="match status" value="1"/>
</dbReference>
<dbReference type="PROSITE" id="PS01064">
    <property type="entry name" value="PYRIDOX_OXIDASE"/>
    <property type="match status" value="1"/>
</dbReference>
<name>PDXH_PELUB</name>
<accession>Q4FN05</accession>
<reference key="1">
    <citation type="journal article" date="2005" name="Science">
        <title>Genome streamlining in a cosmopolitan oceanic bacterium.</title>
        <authorList>
            <person name="Giovannoni S.J."/>
            <person name="Tripp H.J."/>
            <person name="Givan S."/>
            <person name="Podar M."/>
            <person name="Vergin K.L."/>
            <person name="Baptista D."/>
            <person name="Bibbs L."/>
            <person name="Eads J."/>
            <person name="Richardson T.H."/>
            <person name="Noordewier M."/>
            <person name="Rappe M.S."/>
            <person name="Short J.M."/>
            <person name="Carrington J.C."/>
            <person name="Mathur E.J."/>
        </authorList>
    </citation>
    <scope>NUCLEOTIDE SEQUENCE [LARGE SCALE GENOMIC DNA]</scope>
    <source>
        <strain>HTCC1062</strain>
    </source>
</reference>
<sequence>MNQKNSLGLNKCFLDKIDPIDLFEVWMNEAKKTELNDPNALALATSDQNNFPSIRMVLLKDFNKDGFVFYTNLNSQKGNELKNNPKASMCFHWKSLLRQVRINGMVQKVSNKVADEYYSSRGYESRIGAWASKQSTVINNRDELLNSIEEYKKKYSNKNDVPRPEHWSGWNLIPTSIEFWLDGESRIHERLKYTKDTEGNWVKSLLSP</sequence>
<evidence type="ECO:0000255" key="1">
    <source>
        <dbReference type="HAMAP-Rule" id="MF_01629"/>
    </source>
</evidence>
<feature type="chain" id="PRO_0000167730" description="Pyridoxine/pyridoxamine 5'-phosphate oxidase">
    <location>
        <begin position="1"/>
        <end position="208"/>
    </location>
</feature>
<feature type="binding site" evidence="1">
    <location>
        <begin position="55"/>
        <end position="60"/>
    </location>
    <ligand>
        <name>FMN</name>
        <dbReference type="ChEBI" id="CHEBI:58210"/>
    </ligand>
</feature>
<feature type="binding site" evidence="1">
    <location>
        <position position="60"/>
    </location>
    <ligand>
        <name>substrate</name>
    </ligand>
</feature>
<feature type="binding site" evidence="1">
    <location>
        <begin position="70"/>
        <end position="71"/>
    </location>
    <ligand>
        <name>FMN</name>
        <dbReference type="ChEBI" id="CHEBI:58210"/>
    </ligand>
</feature>
<feature type="binding site" evidence="1">
    <location>
        <position position="77"/>
    </location>
    <ligand>
        <name>FMN</name>
        <dbReference type="ChEBI" id="CHEBI:58210"/>
    </ligand>
</feature>
<feature type="binding site" evidence="1">
    <location>
        <position position="99"/>
    </location>
    <ligand>
        <name>FMN</name>
        <dbReference type="ChEBI" id="CHEBI:58210"/>
    </ligand>
</feature>
<feature type="binding site" evidence="1">
    <location>
        <position position="117"/>
    </location>
    <ligand>
        <name>substrate</name>
    </ligand>
</feature>
<feature type="binding site" evidence="1">
    <location>
        <position position="121"/>
    </location>
    <ligand>
        <name>substrate</name>
    </ligand>
</feature>
<feature type="binding site" evidence="1">
    <location>
        <position position="125"/>
    </location>
    <ligand>
        <name>substrate</name>
    </ligand>
</feature>
<feature type="binding site" evidence="1">
    <location>
        <begin position="134"/>
        <end position="135"/>
    </location>
    <ligand>
        <name>FMN</name>
        <dbReference type="ChEBI" id="CHEBI:58210"/>
    </ligand>
</feature>
<feature type="binding site" evidence="1">
    <location>
        <position position="180"/>
    </location>
    <ligand>
        <name>FMN</name>
        <dbReference type="ChEBI" id="CHEBI:58210"/>
    </ligand>
</feature>
<feature type="binding site" evidence="1">
    <location>
        <begin position="186"/>
        <end position="188"/>
    </location>
    <ligand>
        <name>substrate</name>
    </ligand>
</feature>
<feature type="binding site" evidence="1">
    <location>
        <position position="190"/>
    </location>
    <ligand>
        <name>FMN</name>
        <dbReference type="ChEBI" id="CHEBI:58210"/>
    </ligand>
</feature>